<evidence type="ECO:0000250" key="1">
    <source>
        <dbReference type="UniProtKB" id="P02709"/>
    </source>
</evidence>
<evidence type="ECO:0000250" key="2">
    <source>
        <dbReference type="UniProtKB" id="P04757"/>
    </source>
</evidence>
<evidence type="ECO:0000250" key="3">
    <source>
        <dbReference type="UniProtKB" id="P32297"/>
    </source>
</evidence>
<evidence type="ECO:0000250" key="4">
    <source>
        <dbReference type="UniProtKB" id="P43681"/>
    </source>
</evidence>
<evidence type="ECO:0000250" key="5">
    <source>
        <dbReference type="UniProtKB" id="Q8R4G9"/>
    </source>
</evidence>
<evidence type="ECO:0000255" key="6"/>
<evidence type="ECO:0000305" key="7"/>
<keyword id="KW-1003">Cell membrane</keyword>
<keyword id="KW-1015">Disulfide bond</keyword>
<keyword id="KW-0256">Endoplasmic reticulum</keyword>
<keyword id="KW-0325">Glycoprotein</keyword>
<keyword id="KW-0333">Golgi apparatus</keyword>
<keyword id="KW-0407">Ion channel</keyword>
<keyword id="KW-0406">Ion transport</keyword>
<keyword id="KW-1071">Ligand-gated ion channel</keyword>
<keyword id="KW-0472">Membrane</keyword>
<keyword id="KW-0479">Metal-binding</keyword>
<keyword id="KW-0597">Phosphoprotein</keyword>
<keyword id="KW-0675">Receptor</keyword>
<keyword id="KW-1185">Reference proteome</keyword>
<keyword id="KW-0732">Signal</keyword>
<keyword id="KW-0915">Sodium</keyword>
<keyword id="KW-0770">Synapse</keyword>
<keyword id="KW-0812">Transmembrane</keyword>
<keyword id="KW-1133">Transmembrane helix</keyword>
<keyword id="KW-0813">Transport</keyword>
<keyword id="KW-0832">Ubl conjugation</keyword>
<reference key="1">
    <citation type="journal article" date="1992" name="Neurochem. Res.">
        <title>Primary structure of an agonist binding subunit of the nicotinic acetylcholine receptor from bovine adrenal chromaffin cells.</title>
        <authorList>
            <person name="Criado M."/>
            <person name="Alamo L."/>
            <person name="Navarro A."/>
        </authorList>
    </citation>
    <scope>NUCLEOTIDE SEQUENCE [MRNA]</scope>
</reference>
<comment type="function">
    <text evidence="2 3 5">Component of neuronal acetylcholine receptors (nAChRs) that function as pentameric, ligand-gated cation channels with high calcium permeability among other activities. nAChRs are excitatory neurotrasnmitter receptors formed by a collection of nAChR subunits known to mediate synaptic transmission in the nervous system and the neuromuscular junction. Each nAchR subunit confers differential attributes to channel properties, including activation, deactivation and desensitization kinetics, pH sensitivity, cation permeability, and binding to allosteric modulators (By similarity). CHRNA3 forms heteropentameric neuronal acetylcholine receptors with CHRNB2 and CHRNB4 (By similarity). CHRNA3:CHRNB4 being predominant in neurons of the autonomic ganglia, it is known as ganglionic nicotinic receptor (By similarity). CHRNA3:CHRNB4 also plays an important role in the habenulo-interpeduncular tract, modulating the mesolimbic dopamine system and affecting reward circuits and addiction (By similarity). Hypothalamic CHRNA3:CHRNB4 nAChR activation by nicotine leads to activation of POMC neurons and a decrease in food intake (By similarity). Also expressed in the urothelium where it modulates reflex bladder activity by increasing intracellular calcium through extracellular influx and basal ATP release (By similarity).</text>
</comment>
<comment type="catalytic activity">
    <reaction evidence="1">
        <text>K(+)(in) = K(+)(out)</text>
        <dbReference type="Rhea" id="RHEA:29463"/>
        <dbReference type="ChEBI" id="CHEBI:29103"/>
    </reaction>
</comment>
<comment type="catalytic activity">
    <reaction evidence="4">
        <text>Na(+)(in) = Na(+)(out)</text>
        <dbReference type="Rhea" id="RHEA:34963"/>
        <dbReference type="ChEBI" id="CHEBI:29101"/>
    </reaction>
</comment>
<comment type="catalytic activity">
    <reaction evidence="2">
        <text>Ca(2+)(in) = Ca(2+)(out)</text>
        <dbReference type="Rhea" id="RHEA:29671"/>
        <dbReference type="ChEBI" id="CHEBI:29108"/>
    </reaction>
</comment>
<comment type="activity regulation">
    <text evidence="2 3">Activated by a myriad of ligands such as acetylcholine, cytisine, nicotine, choline and epibatidine (By similarity). The heteropentamer CHRNA3:CHRNB2 activity is blocked by alpha-conotoxins ImI, ImII, PnIA, GID and MII (By similarity). The heteropentamer CHRNA3:CHRNB4 activity is blocked by the alpha-conotoxin ImI and AuIB (By similarity).</text>
</comment>
<comment type="subunit">
    <text evidence="2 3">Neuronal AChR is composed of two different types of subunits: alpha and beta. CHRNA3/Alpha-3 subunit can be combined to CHRNB2/beta-2 or CHRNB4/beta-4 to give rise to functional receptors. Part of a complex composed of STUB1/CHIP, VCP/p97, CHRNA3, and UBXN2A that modulates the ubiquitination and endoplasmic reticulum-associated degradation (ERAD) of CHRNA3. Within the complex UBXN2A acts as a scaffold protein required for the interaction of CHRNA3 with VCP/p97, this interaction also inhibits CHRNA3 ubiquitination by STUB1/CHIP and subsequently ERAD. Interacts with UBXN2A (via SEP domain), the interaction is required for the interaction of CHRNA3 in the STUB1:VCP:UBXN2A complex. Interacts with RIC3; which is required for proper folding and assembly. Interacts with LYPD6.</text>
</comment>
<comment type="subcellular location">
    <subcellularLocation>
        <location evidence="2">Synaptic cell membrane</location>
        <topology evidence="6">Multi-pass membrane protein</topology>
    </subcellularLocation>
    <subcellularLocation>
        <location evidence="3">Cell membrane</location>
        <topology evidence="6">Multi-pass membrane protein</topology>
    </subcellularLocation>
    <subcellularLocation>
        <location evidence="2">Endoplasmic reticulum</location>
    </subcellularLocation>
    <subcellularLocation>
        <location evidence="2">Golgi apparatus</location>
    </subcellularLocation>
    <text evidence="2">Interaction with UBXN2A/UBXD4 promotes translocation to the plasma membrane.</text>
</comment>
<comment type="PTM">
    <text evidence="2">Ubiquitinated; by STUB1/CHIP and thereafter degraded by the 26S proteosome complex.</text>
</comment>
<comment type="similarity">
    <text evidence="7">Belongs to the ligand-gated ion channel (TC 1.A.9) family. Acetylcholine receptor (TC 1.A.9.1) subfamily. Alpha-3/CHRNA3 sub-subfamily.</text>
</comment>
<protein>
    <recommendedName>
        <fullName>Neuronal acetylcholine receptor subunit alpha-3</fullName>
    </recommendedName>
</protein>
<gene>
    <name type="primary">CHRNA3</name>
</gene>
<proteinExistence type="evidence at transcript level"/>
<organism>
    <name type="scientific">Bos taurus</name>
    <name type="common">Bovine</name>
    <dbReference type="NCBI Taxonomy" id="9913"/>
    <lineage>
        <taxon>Eukaryota</taxon>
        <taxon>Metazoa</taxon>
        <taxon>Chordata</taxon>
        <taxon>Craniata</taxon>
        <taxon>Vertebrata</taxon>
        <taxon>Euteleostomi</taxon>
        <taxon>Mammalia</taxon>
        <taxon>Eutheria</taxon>
        <taxon>Laurasiatheria</taxon>
        <taxon>Artiodactyla</taxon>
        <taxon>Ruminantia</taxon>
        <taxon>Pecora</taxon>
        <taxon>Bovidae</taxon>
        <taxon>Bovinae</taxon>
        <taxon>Bos</taxon>
    </lineage>
</organism>
<sequence length="495" mass="56914">MARRSRLRRLLLLLLLPVASTSDAEHRLFERLFEDYNEIIRPVANVSDPVIIQFEVSMSQLVKVDEVNQIMETNLWLKQIWNDYKLKWNPSDYDGAEFMRVPAEKIWKPDIVLYNNAVGDFQVDDKTKALLKYTGEVTWIPPAIFKSSCKIDVTYFPFDYQNCTMKFGSWSYDKAKIDLVLIGSSMNLKDYWESGEWAIIKAPGYKHDIKYNCCEEIYPDITYSLYIRRLPLFYTINLIIPCLLISFLTVLVFYLPSDCGEKVTLCISVLLSLTVFLLVITETIPSTSLVIPLIGEYLLFTMIFVTLSIVITVFVLNVHYRTPTTHTMPAWVKTIFLNLLPRVMFMTRPASNEGNTQRPRPFYSAELSNLNCFSRIESKVCKEGYPCQDGLCGYCHHRRAKISNFSANLTRSSSSESVDAVLSLSALSPEIKEAIQSVKYIAENMKAQNEAKEIQDDWKYVAMVIDRIFLWVFILVCILGTAGLFLQPLMTRDDA</sequence>
<feature type="signal peptide" evidence="6">
    <location>
        <begin position="1"/>
        <end position="21"/>
    </location>
</feature>
<feature type="chain" id="PRO_0000000345" description="Neuronal acetylcholine receptor subunit alpha-3">
    <location>
        <begin position="22"/>
        <end position="495"/>
    </location>
</feature>
<feature type="topological domain" description="Extracellular" evidence="3">
    <location>
        <begin position="22"/>
        <end position="240"/>
    </location>
</feature>
<feature type="transmembrane region" description="Helical" evidence="3">
    <location>
        <begin position="241"/>
        <end position="256"/>
    </location>
</feature>
<feature type="topological domain" description="Cytoplasmic" evidence="3">
    <location>
        <begin position="257"/>
        <end position="258"/>
    </location>
</feature>
<feature type="transmembrane region" description="Helical" evidence="3">
    <location>
        <begin position="259"/>
        <end position="275"/>
    </location>
</feature>
<feature type="topological domain" description="Extracellular" evidence="3">
    <location>
        <begin position="276"/>
        <end position="297"/>
    </location>
</feature>
<feature type="transmembrane region" description="Helical" evidence="3">
    <location>
        <begin position="298"/>
        <end position="316"/>
    </location>
</feature>
<feature type="topological domain" description="Cytoplasmic" evidence="3">
    <location>
        <begin position="317"/>
        <end position="464"/>
    </location>
</feature>
<feature type="transmembrane region" description="Helical" evidence="3">
    <location>
        <begin position="465"/>
        <end position="483"/>
    </location>
</feature>
<feature type="topological domain" description="Extracellular" evidence="3">
    <location>
        <begin position="484"/>
        <end position="495"/>
    </location>
</feature>
<feature type="binding site" evidence="3">
    <location>
        <position position="261"/>
    </location>
    <ligand>
        <name>Na(+)</name>
        <dbReference type="ChEBI" id="CHEBI:29101"/>
    </ligand>
</feature>
<feature type="modified residue" description="Phosphoserine" evidence="2">
    <location>
        <position position="403"/>
    </location>
</feature>
<feature type="modified residue" description="Phosphoserine" evidence="2">
    <location>
        <position position="406"/>
    </location>
</feature>
<feature type="glycosylation site" description="N-linked (GlcNAc...) asparagine" evidence="6">
    <location>
        <position position="45"/>
    </location>
</feature>
<feature type="glycosylation site" description="N-linked (GlcNAc...) asparagine" evidence="6">
    <location>
        <position position="162"/>
    </location>
</feature>
<feature type="disulfide bond" evidence="3">
    <location>
        <begin position="149"/>
        <end position="163"/>
    </location>
</feature>
<feature type="disulfide bond" description="Associated with receptor activation" evidence="3">
    <location>
        <begin position="213"/>
        <end position="214"/>
    </location>
</feature>
<accession>Q07263</accession>
<name>ACHA3_BOVIN</name>
<dbReference type="EMBL" id="X57032">
    <property type="protein sequence ID" value="CAA40348.1"/>
    <property type="molecule type" value="mRNA"/>
</dbReference>
<dbReference type="PIR" id="S60589">
    <property type="entry name" value="S60589"/>
</dbReference>
<dbReference type="RefSeq" id="NP_777144.1">
    <property type="nucleotide sequence ID" value="NM_174719.2"/>
</dbReference>
<dbReference type="SMR" id="Q07263"/>
<dbReference type="FunCoup" id="Q07263">
    <property type="interactions" value="309"/>
</dbReference>
<dbReference type="STRING" id="9913.ENSBTAP00000004070"/>
<dbReference type="ChEMBL" id="CHEMBL5317"/>
<dbReference type="GlyCosmos" id="Q07263">
    <property type="glycosylation" value="2 sites, No reported glycans"/>
</dbReference>
<dbReference type="GlyGen" id="Q07263">
    <property type="glycosylation" value="2 sites"/>
</dbReference>
<dbReference type="PaxDb" id="9913-ENSBTAP00000004070"/>
<dbReference type="GeneID" id="282702"/>
<dbReference type="KEGG" id="bta:282702"/>
<dbReference type="CTD" id="1136"/>
<dbReference type="eggNOG" id="KOG3645">
    <property type="taxonomic scope" value="Eukaryota"/>
</dbReference>
<dbReference type="InParanoid" id="Q07263"/>
<dbReference type="OrthoDB" id="5975154at2759"/>
<dbReference type="PRO" id="PR:Q07263"/>
<dbReference type="Proteomes" id="UP000009136">
    <property type="component" value="Unplaced"/>
</dbReference>
<dbReference type="GO" id="GO:0005892">
    <property type="term" value="C:acetylcholine-gated channel complex"/>
    <property type="evidence" value="ECO:0000250"/>
    <property type="project" value="UniProtKB"/>
</dbReference>
<dbReference type="GO" id="GO:0005783">
    <property type="term" value="C:endoplasmic reticulum"/>
    <property type="evidence" value="ECO:0007669"/>
    <property type="project" value="UniProtKB-SubCell"/>
</dbReference>
<dbReference type="GO" id="GO:0005794">
    <property type="term" value="C:Golgi apparatus"/>
    <property type="evidence" value="ECO:0007669"/>
    <property type="project" value="UniProtKB-SubCell"/>
</dbReference>
<dbReference type="GO" id="GO:0043005">
    <property type="term" value="C:neuron projection"/>
    <property type="evidence" value="ECO:0000318"/>
    <property type="project" value="GO_Central"/>
</dbReference>
<dbReference type="GO" id="GO:0005886">
    <property type="term" value="C:plasma membrane"/>
    <property type="evidence" value="ECO:0000318"/>
    <property type="project" value="GO_Central"/>
</dbReference>
<dbReference type="GO" id="GO:0045211">
    <property type="term" value="C:postsynaptic membrane"/>
    <property type="evidence" value="ECO:0007669"/>
    <property type="project" value="UniProtKB-KW"/>
</dbReference>
<dbReference type="GO" id="GO:0045202">
    <property type="term" value="C:synapse"/>
    <property type="evidence" value="ECO:0000318"/>
    <property type="project" value="GO_Central"/>
</dbReference>
<dbReference type="GO" id="GO:0015464">
    <property type="term" value="F:acetylcholine receptor activity"/>
    <property type="evidence" value="ECO:0000250"/>
    <property type="project" value="UniProtKB"/>
</dbReference>
<dbReference type="GO" id="GO:0022848">
    <property type="term" value="F:acetylcholine-gated monoatomic cation-selective channel activity"/>
    <property type="evidence" value="ECO:0000250"/>
    <property type="project" value="UniProtKB"/>
</dbReference>
<dbReference type="GO" id="GO:0095500">
    <property type="term" value="P:acetylcholine receptor signaling pathway"/>
    <property type="evidence" value="ECO:0000318"/>
    <property type="project" value="GO_Central"/>
</dbReference>
<dbReference type="GO" id="GO:0035095">
    <property type="term" value="P:behavioral response to nicotine"/>
    <property type="evidence" value="ECO:0000250"/>
    <property type="project" value="UniProtKB"/>
</dbReference>
<dbReference type="GO" id="GO:0051899">
    <property type="term" value="P:membrane depolarization"/>
    <property type="evidence" value="ECO:0000318"/>
    <property type="project" value="GO_Central"/>
</dbReference>
<dbReference type="GO" id="GO:0034220">
    <property type="term" value="P:monoatomic ion transmembrane transport"/>
    <property type="evidence" value="ECO:0000318"/>
    <property type="project" value="GO_Central"/>
</dbReference>
<dbReference type="GO" id="GO:0007399">
    <property type="term" value="P:nervous system development"/>
    <property type="evidence" value="ECO:0000250"/>
    <property type="project" value="UniProtKB"/>
</dbReference>
<dbReference type="GO" id="GO:0007274">
    <property type="term" value="P:neuromuscular synaptic transmission"/>
    <property type="evidence" value="ECO:0000318"/>
    <property type="project" value="GO_Central"/>
</dbReference>
<dbReference type="GO" id="GO:0035094">
    <property type="term" value="P:response to nicotine"/>
    <property type="evidence" value="ECO:0000318"/>
    <property type="project" value="GO_Central"/>
</dbReference>
<dbReference type="GO" id="GO:0007165">
    <property type="term" value="P:signal transduction"/>
    <property type="evidence" value="ECO:0000250"/>
    <property type="project" value="UniProtKB"/>
</dbReference>
<dbReference type="GO" id="GO:0060084">
    <property type="term" value="P:synaptic transmission involved in micturition"/>
    <property type="evidence" value="ECO:0000250"/>
    <property type="project" value="UniProtKB"/>
</dbReference>
<dbReference type="GO" id="GO:0007271">
    <property type="term" value="P:synaptic transmission, cholinergic"/>
    <property type="evidence" value="ECO:0000318"/>
    <property type="project" value="GO_Central"/>
</dbReference>
<dbReference type="CDD" id="cd19016">
    <property type="entry name" value="LGIC_ECD_nAChR_A3"/>
    <property type="match status" value="1"/>
</dbReference>
<dbReference type="CDD" id="cd19064">
    <property type="entry name" value="LGIC_TM_nAChR"/>
    <property type="match status" value="1"/>
</dbReference>
<dbReference type="FunFam" id="2.70.170.10:FF:000008">
    <property type="entry name" value="Cholinergic receptor nicotinic alpha 6 subunit"/>
    <property type="match status" value="1"/>
</dbReference>
<dbReference type="FunFam" id="1.20.58.390:FF:000017">
    <property type="entry name" value="Neuronal acetylcholine receptor subunit alpha-3"/>
    <property type="match status" value="1"/>
</dbReference>
<dbReference type="FunFam" id="1.20.58.390:FF:000001">
    <property type="entry name" value="Neuronal nicotinic acetylcholine receptor subunit 3"/>
    <property type="match status" value="1"/>
</dbReference>
<dbReference type="Gene3D" id="2.70.170.10">
    <property type="entry name" value="Neurotransmitter-gated ion-channel ligand-binding domain"/>
    <property type="match status" value="1"/>
</dbReference>
<dbReference type="Gene3D" id="1.20.58.390">
    <property type="entry name" value="Neurotransmitter-gated ion-channel transmembrane domain"/>
    <property type="match status" value="2"/>
</dbReference>
<dbReference type="InterPro" id="IPR006202">
    <property type="entry name" value="Neur_chan_lig-bd"/>
</dbReference>
<dbReference type="InterPro" id="IPR036734">
    <property type="entry name" value="Neur_chan_lig-bd_sf"/>
</dbReference>
<dbReference type="InterPro" id="IPR006201">
    <property type="entry name" value="Neur_channel"/>
</dbReference>
<dbReference type="InterPro" id="IPR036719">
    <property type="entry name" value="Neuro-gated_channel_TM_sf"/>
</dbReference>
<dbReference type="InterPro" id="IPR038050">
    <property type="entry name" value="Neuro_actylchol_rec"/>
</dbReference>
<dbReference type="InterPro" id="IPR006029">
    <property type="entry name" value="Neurotrans-gated_channel_TM"/>
</dbReference>
<dbReference type="InterPro" id="IPR018000">
    <property type="entry name" value="Neurotransmitter_ion_chnl_CS"/>
</dbReference>
<dbReference type="InterPro" id="IPR002394">
    <property type="entry name" value="Nicotinic_acetylcholine_rcpt"/>
</dbReference>
<dbReference type="NCBIfam" id="TIGR00860">
    <property type="entry name" value="LIC"/>
    <property type="match status" value="1"/>
</dbReference>
<dbReference type="PANTHER" id="PTHR18945">
    <property type="entry name" value="NEUROTRANSMITTER GATED ION CHANNEL"/>
    <property type="match status" value="1"/>
</dbReference>
<dbReference type="Pfam" id="PF02931">
    <property type="entry name" value="Neur_chan_LBD"/>
    <property type="match status" value="1"/>
</dbReference>
<dbReference type="Pfam" id="PF02932">
    <property type="entry name" value="Neur_chan_memb"/>
    <property type="match status" value="1"/>
</dbReference>
<dbReference type="PRINTS" id="PR00254">
    <property type="entry name" value="NICOTINICR"/>
</dbReference>
<dbReference type="PRINTS" id="PR00252">
    <property type="entry name" value="NRIONCHANNEL"/>
</dbReference>
<dbReference type="SUPFAM" id="SSF90112">
    <property type="entry name" value="Neurotransmitter-gated ion-channel transmembrane pore"/>
    <property type="match status" value="1"/>
</dbReference>
<dbReference type="SUPFAM" id="SSF63712">
    <property type="entry name" value="Nicotinic receptor ligand binding domain-like"/>
    <property type="match status" value="1"/>
</dbReference>
<dbReference type="PROSITE" id="PS00236">
    <property type="entry name" value="NEUROTR_ION_CHANNEL"/>
    <property type="match status" value="1"/>
</dbReference>